<protein>
    <recommendedName>
        <fullName evidence="5">Mechanosensitive cation channel TMEM63B</fullName>
    </recommendedName>
    <alternativeName>
        <fullName evidence="4">Transmembrane protein 63B</fullName>
    </alternativeName>
</protein>
<feature type="chain" id="PRO_0000462250" description="Mechanosensitive cation channel TMEM63B">
    <location>
        <begin position="1"/>
        <end position="816"/>
    </location>
</feature>
<feature type="topological domain" description="Extracellular" evidence="1">
    <location>
        <begin position="1"/>
        <end position="46"/>
    </location>
</feature>
<feature type="transmembrane region" description="Helical; Name=TM0" evidence="1">
    <location>
        <begin position="47"/>
        <end position="71"/>
    </location>
</feature>
<feature type="topological domain" description="Cytoplasmic" evidence="1">
    <location>
        <begin position="72"/>
        <end position="138"/>
    </location>
</feature>
<feature type="transmembrane region" description="Helical; Name=TM1" evidence="1">
    <location>
        <begin position="139"/>
        <end position="171"/>
    </location>
</feature>
<feature type="topological domain" description="Extracellular" evidence="1">
    <location>
        <begin position="172"/>
        <end position="195"/>
    </location>
</feature>
<feature type="transmembrane region" description="Helical; Name=TM2" evidence="1">
    <location>
        <begin position="196"/>
        <end position="220"/>
    </location>
</feature>
<feature type="topological domain" description="Cytoplasmic" evidence="1">
    <location>
        <begin position="221"/>
        <end position="420"/>
    </location>
</feature>
<feature type="transmembrane region" description="Helical; Name=TM3" evidence="1">
    <location>
        <begin position="421"/>
        <end position="450"/>
    </location>
</feature>
<feature type="topological domain" description="Extracellular" evidence="1">
    <location>
        <begin position="451"/>
        <end position="465"/>
    </location>
</feature>
<feature type="transmembrane region" description="Helical; Name=TM4" evidence="1">
    <location>
        <begin position="466"/>
        <end position="495"/>
    </location>
</feature>
<feature type="topological domain" description="Cytoplasmic" evidence="1 5">
    <location>
        <begin position="496"/>
        <end position="499"/>
    </location>
</feature>
<feature type="transmembrane region" description="Helical; Name=TM5" evidence="1">
    <location>
        <begin position="500"/>
        <end position="536"/>
    </location>
</feature>
<feature type="topological domain" description="Extracellular" evidence="1">
    <location>
        <begin position="537"/>
        <end position="559"/>
    </location>
</feature>
<feature type="transmembrane region" description="Helical; Name=TM6" evidence="1">
    <location>
        <begin position="560"/>
        <end position="592"/>
    </location>
</feature>
<feature type="topological domain" description="Cytoplasmic" evidence="1">
    <location>
        <begin position="593"/>
        <end position="612"/>
    </location>
</feature>
<feature type="transmembrane region" description="Helical; Name=TM7" evidence="1">
    <location>
        <begin position="613"/>
        <end position="631"/>
    </location>
</feature>
<feature type="topological domain" description="Extracellular" evidence="1 5">
    <location>
        <begin position="632"/>
        <end position="634"/>
    </location>
</feature>
<feature type="transmembrane region" description="Helical; Name=TM8" evidence="1">
    <location>
        <begin position="635"/>
        <end position="659"/>
    </location>
</feature>
<feature type="topological domain" description="Cytoplasmic" evidence="1 5">
    <location>
        <begin position="660"/>
        <end position="666"/>
    </location>
</feature>
<feature type="transmembrane region" description="Helical; Name=TM9" evidence="1">
    <location>
        <begin position="667"/>
        <end position="695"/>
    </location>
</feature>
<feature type="topological domain" description="Extracellular" evidence="1 5">
    <location>
        <begin position="696"/>
        <end position="700"/>
    </location>
</feature>
<feature type="transmembrane region" description="Helical; Name=TM10" evidence="1">
    <location>
        <begin position="701"/>
        <end position="721"/>
    </location>
</feature>
<feature type="topological domain" description="Cytoplasmic" evidence="1">
    <location>
        <begin position="722"/>
        <end position="816"/>
    </location>
</feature>
<feature type="region of interest" description="Intracellular linker IL2; confers mechanosensitivity" evidence="2">
    <location>
        <begin position="224"/>
        <end position="419"/>
    </location>
</feature>
<feature type="region of interest" description="Gating helix" evidence="2">
    <location>
        <begin position="560"/>
        <end position="592"/>
    </location>
</feature>
<feature type="lipid moiety-binding region" description="S-palmitoyl cysteine" evidence="1">
    <location>
        <position position="57"/>
    </location>
</feature>
<feature type="lipid moiety-binding region" description="S-palmitoyl cysteine" evidence="1">
    <location>
        <position position="119"/>
    </location>
</feature>
<feature type="lipid moiety-binding region" description="S-palmitoyl cysteine" evidence="1">
    <location>
        <position position="375"/>
    </location>
</feature>
<feature type="lipid moiety-binding region" description="S-palmitoyl cysteine" evidence="1">
    <location>
        <position position="391"/>
    </location>
</feature>
<feature type="lipid moiety-binding region" description="S-palmitoyl cysteine" evidence="1">
    <location>
        <position position="719"/>
    </location>
</feature>
<feature type="lipid moiety-binding region" description="S-palmitoyl cysteine" evidence="1">
    <location>
        <position position="722"/>
    </location>
</feature>
<gene>
    <name evidence="4" type="primary">TMEM63B</name>
</gene>
<evidence type="ECO:0000250" key="1">
    <source>
        <dbReference type="UniProtKB" id="Q3TWI9"/>
    </source>
</evidence>
<evidence type="ECO:0000250" key="2">
    <source>
        <dbReference type="UniProtKB" id="Q5T3F8"/>
    </source>
</evidence>
<evidence type="ECO:0000269" key="3">
    <source>
    </source>
</evidence>
<evidence type="ECO:0000303" key="4">
    <source>
    </source>
</evidence>
<evidence type="ECO:0000305" key="5"/>
<reference key="1">
    <citation type="journal article" date="2004" name="Nature">
        <title>Sequence and comparative analysis of the chicken genome provide unique perspectives on vertebrate evolution.</title>
        <authorList>
            <person name="Hillier L.W."/>
            <person name="Miller W."/>
            <person name="Birney E."/>
            <person name="Warren W."/>
            <person name="Hardison R.C."/>
            <person name="Ponting C.P."/>
            <person name="Bork P."/>
            <person name="Burt D.W."/>
            <person name="Groenen M.A.M."/>
            <person name="Delany M.E."/>
            <person name="Dodgson J.B."/>
            <person name="Chinwalla A.T."/>
            <person name="Cliften P.F."/>
            <person name="Clifton S.W."/>
            <person name="Delehaunty K.D."/>
            <person name="Fronick C."/>
            <person name="Fulton R.S."/>
            <person name="Graves T.A."/>
            <person name="Kremitzki C."/>
            <person name="Layman D."/>
            <person name="Magrini V."/>
            <person name="McPherson J.D."/>
            <person name="Miner T.L."/>
            <person name="Minx P."/>
            <person name="Nash W.E."/>
            <person name="Nhan M.N."/>
            <person name="Nelson J.O."/>
            <person name="Oddy L.G."/>
            <person name="Pohl C.S."/>
            <person name="Randall-Maher J."/>
            <person name="Smith S.M."/>
            <person name="Wallis J.W."/>
            <person name="Yang S.-P."/>
            <person name="Romanov M.N."/>
            <person name="Rondelli C.M."/>
            <person name="Paton B."/>
            <person name="Smith J."/>
            <person name="Morrice D."/>
            <person name="Daniels L."/>
            <person name="Tempest H.G."/>
            <person name="Robertson L."/>
            <person name="Masabanda J.S."/>
            <person name="Griffin D.K."/>
            <person name="Vignal A."/>
            <person name="Fillon V."/>
            <person name="Jacobbson L."/>
            <person name="Kerje S."/>
            <person name="Andersson L."/>
            <person name="Crooijmans R.P."/>
            <person name="Aerts J."/>
            <person name="van der Poel J.J."/>
            <person name="Ellegren H."/>
            <person name="Caldwell R.B."/>
            <person name="Hubbard S.J."/>
            <person name="Grafham D.V."/>
            <person name="Kierzek A.M."/>
            <person name="McLaren S.R."/>
            <person name="Overton I.M."/>
            <person name="Arakawa H."/>
            <person name="Beattie K.J."/>
            <person name="Bezzubov Y."/>
            <person name="Boardman P.E."/>
            <person name="Bonfield J.K."/>
            <person name="Croning M.D.R."/>
            <person name="Davies R.M."/>
            <person name="Francis M.D."/>
            <person name="Humphray S.J."/>
            <person name="Scott C.E."/>
            <person name="Taylor R.G."/>
            <person name="Tickle C."/>
            <person name="Brown W.R.A."/>
            <person name="Rogers J."/>
            <person name="Buerstedde J.-M."/>
            <person name="Wilson S.A."/>
            <person name="Stubbs L."/>
            <person name="Ovcharenko I."/>
            <person name="Gordon L."/>
            <person name="Lucas S."/>
            <person name="Miller M.M."/>
            <person name="Inoko H."/>
            <person name="Shiina T."/>
            <person name="Kaufman J."/>
            <person name="Salomonsen J."/>
            <person name="Skjoedt K."/>
            <person name="Wong G.K.-S."/>
            <person name="Wang J."/>
            <person name="Liu B."/>
            <person name="Wang J."/>
            <person name="Yu J."/>
            <person name="Yang H."/>
            <person name="Nefedov M."/>
            <person name="Koriabine M."/>
            <person name="Dejong P.J."/>
            <person name="Goodstadt L."/>
            <person name="Webber C."/>
            <person name="Dickens N.J."/>
            <person name="Letunic I."/>
            <person name="Suyama M."/>
            <person name="Torrents D."/>
            <person name="von Mering C."/>
            <person name="Zdobnov E.M."/>
            <person name="Makova K."/>
            <person name="Nekrutenko A."/>
            <person name="Elnitski L."/>
            <person name="Eswara P."/>
            <person name="King D.C."/>
            <person name="Yang S.-P."/>
            <person name="Tyekucheva S."/>
            <person name="Radakrishnan A."/>
            <person name="Harris R.S."/>
            <person name="Chiaromonte F."/>
            <person name="Taylor J."/>
            <person name="He J."/>
            <person name="Rijnkels M."/>
            <person name="Griffiths-Jones S."/>
            <person name="Ureta-Vidal A."/>
            <person name="Hoffman M.M."/>
            <person name="Severin J."/>
            <person name="Searle S.M.J."/>
            <person name="Law A.S."/>
            <person name="Speed D."/>
            <person name="Waddington D."/>
            <person name="Cheng Z."/>
            <person name="Tuzun E."/>
            <person name="Eichler E."/>
            <person name="Bao Z."/>
            <person name="Flicek P."/>
            <person name="Shteynberg D.D."/>
            <person name="Brent M.R."/>
            <person name="Bye J.M."/>
            <person name="Huckle E.J."/>
            <person name="Chatterji S."/>
            <person name="Dewey C."/>
            <person name="Pachter L."/>
            <person name="Kouranov A."/>
            <person name="Mourelatos Z."/>
            <person name="Hatzigeorgiou A.G."/>
            <person name="Paterson A.H."/>
            <person name="Ivarie R."/>
            <person name="Brandstrom M."/>
            <person name="Axelsson E."/>
            <person name="Backstrom N."/>
            <person name="Berlin S."/>
            <person name="Webster M.T."/>
            <person name="Pourquie O."/>
            <person name="Reymond A."/>
            <person name="Ucla C."/>
            <person name="Antonarakis S.E."/>
            <person name="Long M."/>
            <person name="Emerson J.J."/>
            <person name="Betran E."/>
            <person name="Dupanloup I."/>
            <person name="Kaessmann H."/>
            <person name="Hinrichs A.S."/>
            <person name="Bejerano G."/>
            <person name="Furey T.S."/>
            <person name="Harte R.A."/>
            <person name="Raney B."/>
            <person name="Siepel A."/>
            <person name="Kent W.J."/>
            <person name="Haussler D."/>
            <person name="Eyras E."/>
            <person name="Castelo R."/>
            <person name="Abril J.F."/>
            <person name="Castellano S."/>
            <person name="Camara F."/>
            <person name="Parra G."/>
            <person name="Guigo R."/>
            <person name="Bourque G."/>
            <person name="Tesler G."/>
            <person name="Pevzner P.A."/>
            <person name="Smit A."/>
            <person name="Fulton L.A."/>
            <person name="Mardis E.R."/>
            <person name="Wilson R.K."/>
        </authorList>
    </citation>
    <scope>NUCLEOTIDE SEQUENCE [LARGE SCALE GENOMIC DNA]</scope>
    <source>
        <strain>Red jungle fowl</strain>
    </source>
</reference>
<reference key="2">
    <citation type="journal article" date="2024" name="FEBS Lett.">
        <title>Membrane structure-responsive lipid scramblase activity of the TMEM63/OSCA family.</title>
        <authorList>
            <person name="Miyata Y."/>
            <person name="Nishimura M."/>
            <person name="Nagata A."/>
            <person name="Jing X."/>
            <person name="Sultan C.S."/>
            <person name="Kuribayashi R."/>
            <person name="Takahashi K."/>
            <person name="Lee Y."/>
            <person name="Nishizawa T."/>
            <person name="Segawa K."/>
        </authorList>
    </citation>
    <scope>FUNCTION</scope>
</reference>
<dbReference type="Ensembl" id="ENSGALT00000100982">
    <property type="protein sequence ID" value="ENSGALP00000073850"/>
    <property type="gene ID" value="ENSGALG00000010282"/>
</dbReference>
<dbReference type="Ensembl" id="ENSGALT00010047411.1">
    <property type="protein sequence ID" value="ENSGALP00010028092.1"/>
    <property type="gene ID" value="ENSGALG00010019649.1"/>
</dbReference>
<dbReference type="Ensembl" id="ENSGALT00015039041">
    <property type="protein sequence ID" value="ENSGALP00015022686"/>
    <property type="gene ID" value="ENSGALG00015015995"/>
</dbReference>
<dbReference type="GeneTree" id="ENSGT00940000157084"/>
<dbReference type="OrthoDB" id="1689567at2759"/>
<dbReference type="Proteomes" id="UP000000539">
    <property type="component" value="Chromosome 3"/>
</dbReference>
<dbReference type="GO" id="GO:0015629">
    <property type="term" value="C:actin cytoskeleton"/>
    <property type="evidence" value="ECO:0007669"/>
    <property type="project" value="Ensembl"/>
</dbReference>
<dbReference type="GO" id="GO:0031901">
    <property type="term" value="C:early endosome membrane"/>
    <property type="evidence" value="ECO:0007669"/>
    <property type="project" value="Ensembl"/>
</dbReference>
<dbReference type="GO" id="GO:0005765">
    <property type="term" value="C:lysosomal membrane"/>
    <property type="evidence" value="ECO:0000250"/>
    <property type="project" value="UniProtKB"/>
</dbReference>
<dbReference type="GO" id="GO:0005886">
    <property type="term" value="C:plasma membrane"/>
    <property type="evidence" value="ECO:0000250"/>
    <property type="project" value="UniProtKB"/>
</dbReference>
<dbReference type="GO" id="GO:0005227">
    <property type="term" value="F:calcium-activated cation channel activity"/>
    <property type="evidence" value="ECO:0000318"/>
    <property type="project" value="GO_Central"/>
</dbReference>
<dbReference type="GO" id="GO:0140135">
    <property type="term" value="F:mechanosensitive monoatomic cation channel activity"/>
    <property type="evidence" value="ECO:0007669"/>
    <property type="project" value="Ensembl"/>
</dbReference>
<dbReference type="GO" id="GO:1990760">
    <property type="term" value="F:osmolarity-sensing monoatomic cation channel activity"/>
    <property type="evidence" value="ECO:0000250"/>
    <property type="project" value="UniProtKB"/>
</dbReference>
<dbReference type="GO" id="GO:0120019">
    <property type="term" value="F:phosphatidylcholine transfer activity"/>
    <property type="evidence" value="ECO:0000250"/>
    <property type="project" value="UniProtKB"/>
</dbReference>
<dbReference type="GO" id="GO:0017128">
    <property type="term" value="F:phospholipid scramblase activity"/>
    <property type="evidence" value="ECO:0000314"/>
    <property type="project" value="UniProtKB"/>
</dbReference>
<dbReference type="GO" id="GO:0140338">
    <property type="term" value="F:sphingomyelin transfer activity"/>
    <property type="evidence" value="ECO:0000250"/>
    <property type="project" value="UniProtKB"/>
</dbReference>
<dbReference type="GO" id="GO:0042756">
    <property type="term" value="P:drinking behavior"/>
    <property type="evidence" value="ECO:0000250"/>
    <property type="project" value="UniProtKB"/>
</dbReference>
<dbReference type="GO" id="GO:0036335">
    <property type="term" value="P:intestinal stem cell homeostasis"/>
    <property type="evidence" value="ECO:0007669"/>
    <property type="project" value="Ensembl"/>
</dbReference>
<dbReference type="GO" id="GO:0007605">
    <property type="term" value="P:sensory perception of sound"/>
    <property type="evidence" value="ECO:0007669"/>
    <property type="project" value="Ensembl"/>
</dbReference>
<dbReference type="GO" id="GO:0160069">
    <property type="term" value="P:surfactant secretion"/>
    <property type="evidence" value="ECO:0007669"/>
    <property type="project" value="Ensembl"/>
</dbReference>
<dbReference type="InterPro" id="IPR045122">
    <property type="entry name" value="Csc1-like"/>
</dbReference>
<dbReference type="InterPro" id="IPR003864">
    <property type="entry name" value="CSC1/OSCA1-like_7TM"/>
</dbReference>
<dbReference type="InterPro" id="IPR027815">
    <property type="entry name" value="CSC1/OSCA1-like_cyt"/>
</dbReference>
<dbReference type="InterPro" id="IPR032880">
    <property type="entry name" value="Csc1/OSCA1-like_N"/>
</dbReference>
<dbReference type="PANTHER" id="PTHR13018:SF38">
    <property type="entry name" value="CSC1-LIKE PROTEIN 2"/>
    <property type="match status" value="1"/>
</dbReference>
<dbReference type="PANTHER" id="PTHR13018">
    <property type="entry name" value="PROBABLE MEMBRANE PROTEIN DUF221-RELATED"/>
    <property type="match status" value="1"/>
</dbReference>
<dbReference type="Pfam" id="PF14703">
    <property type="entry name" value="PHM7_cyt"/>
    <property type="match status" value="1"/>
</dbReference>
<dbReference type="Pfam" id="PF02714">
    <property type="entry name" value="RSN1_7TM"/>
    <property type="match status" value="1"/>
</dbReference>
<dbReference type="Pfam" id="PF13967">
    <property type="entry name" value="RSN1_TM"/>
    <property type="match status" value="1"/>
</dbReference>
<keyword id="KW-0106">Calcium</keyword>
<keyword id="KW-1003">Cell membrane</keyword>
<keyword id="KW-0967">Endosome</keyword>
<keyword id="KW-0407">Ion channel</keyword>
<keyword id="KW-0406">Ion transport</keyword>
<keyword id="KW-0449">Lipoprotein</keyword>
<keyword id="KW-0458">Lysosome</keyword>
<keyword id="KW-0472">Membrane</keyword>
<keyword id="KW-0564">Palmitate</keyword>
<keyword id="KW-1185">Reference proteome</keyword>
<keyword id="KW-0812">Transmembrane</keyword>
<keyword id="KW-1133">Transmembrane helix</keyword>
<keyword id="KW-0813">Transport</keyword>
<proteinExistence type="inferred from homology"/>
<sequence length="816" mass="92953">MLPYVIATLGSAGSTCKASTCSNSTKDYCYSARIRSTVLQGLPFGGVPTVLALDFMCFLALLFVFSILRKVAWDYGRLALVTDADSIASALHSDNHDRYERLTSVSSSVDFDQRDNGFCSWLTAIFRIKDDEIRDKCGGDAVHYLSFQRHIIGLLVAVGVLSVGIVLPVNFSGDLLENNAYSFGRTTIANLNSGNNLLWLHTSFAFLYLLLTVYSMRRHTSKMRYKEDDLVKRTLFINGISKYAEPEKIKKHFEEAYANCTVLEARPCYDVARLMFLDAERRKAERGRIYFTNLQSKENTPSMINPKPCGHLCCCVIRGCEEVEAIEYYTKLEEKLKDDYKREKEKVNEKPLGMAFVTFHNETITAIILKDFNACKCQGCACRGEPRASSCSESLHVSNWTVSYAPDPQNIYWEHLSIRGFIWWIRCLVINVVLFILLFFLTTPAIIITTMDKFNVTKPVEYLNNPIITQFFPTLLLWCFSALLPTIVYYSAFFEAHWTRSGENRTTMHKCYTFLIFMVLLLPSLGLSSLDVFFRWLFDKKFLAEAAVRFECVFLPDNGAFFVNYVIASAFIGNAMDLLRIPGLLMYMIRLCLARSAAERRNVKRHQAYEFQFGAAYAWMMCVFTVVMTYSITCPIIVPFGLMYMLLKHLVDRYNLYYAYLPAKLDKKIHSGAVNQVVAAPILCLFWLLFFSTMRTGFLAPTSMFTFVVLVITIVICLCHVCFGHFKYLSAHNYKIEHTEVDTTESRQNGRPATNLPAPKSAKYIAQVLQDSSPEGEATESEEQGSQDEELITTDGMNDTDFQSCEDSLIENEIRQ</sequence>
<accession>A0A8V0ZB02</accession>
<name>TM63B_CHICK</name>
<comment type="function">
    <text evidence="2 3">Mechanosensitive cation channel with low conductance and high activation threshold (By similarity). Osmosensitive cation channel preferentially activated by hypotonic stress (By similarity). Also acts as a phospholipid scramblase in response to changes in membrane structure: upon changes in membrane curvature and thickness, alters its conformation and translocates phospholipids, thereby controlling plasma membrane lipid distribution (PubMed:39716028).</text>
</comment>
<comment type="catalytic activity">
    <reaction evidence="2">
        <text>Ca(2+)(in) = Ca(2+)(out)</text>
        <dbReference type="Rhea" id="RHEA:29671"/>
        <dbReference type="ChEBI" id="CHEBI:29108"/>
    </reaction>
</comment>
<comment type="catalytic activity">
    <reaction evidence="1">
        <text>Mg(2+)(in) = Mg(2+)(out)</text>
        <dbReference type="Rhea" id="RHEA:29827"/>
        <dbReference type="ChEBI" id="CHEBI:18420"/>
    </reaction>
</comment>
<comment type="catalytic activity">
    <reaction evidence="2">
        <text>K(+)(in) = K(+)(out)</text>
        <dbReference type="Rhea" id="RHEA:29463"/>
        <dbReference type="ChEBI" id="CHEBI:29103"/>
    </reaction>
</comment>
<comment type="catalytic activity">
    <reaction evidence="2">
        <text>Na(+)(in) = Na(+)(out)</text>
        <dbReference type="Rhea" id="RHEA:34963"/>
        <dbReference type="ChEBI" id="CHEBI:29101"/>
    </reaction>
</comment>
<comment type="catalytic activity">
    <reaction evidence="1">
        <text>Cs(+)(in) = Cs(+)(out)</text>
        <dbReference type="Rhea" id="RHEA:78555"/>
        <dbReference type="ChEBI" id="CHEBI:49547"/>
    </reaction>
</comment>
<comment type="subunit">
    <text evidence="2">Monomer.</text>
</comment>
<comment type="subcellular location">
    <subcellularLocation>
        <location evidence="2">Cell membrane</location>
        <topology evidence="2">Multi-pass membrane protein</topology>
    </subcellularLocation>
    <subcellularLocation>
        <location evidence="2">Lysosome membrane</location>
        <topology evidence="2">Multi-pass membrane protein</topology>
    </subcellularLocation>
    <subcellularLocation>
        <location evidence="2">Early endosome membrane</location>
        <topology evidence="2">Multi-pass membrane protein</topology>
    </subcellularLocation>
</comment>
<comment type="PTM">
    <text evidence="1">Palmitoylation is required for localization to the plasma membrane and stability.</text>
</comment>
<comment type="similarity">
    <text evidence="5">Belongs to the CSC1 (TC 1.A.17) family.</text>
</comment>
<organism>
    <name type="scientific">Gallus gallus</name>
    <name type="common">Chicken</name>
    <dbReference type="NCBI Taxonomy" id="9031"/>
    <lineage>
        <taxon>Eukaryota</taxon>
        <taxon>Metazoa</taxon>
        <taxon>Chordata</taxon>
        <taxon>Craniata</taxon>
        <taxon>Vertebrata</taxon>
        <taxon>Euteleostomi</taxon>
        <taxon>Archelosauria</taxon>
        <taxon>Archosauria</taxon>
        <taxon>Dinosauria</taxon>
        <taxon>Saurischia</taxon>
        <taxon>Theropoda</taxon>
        <taxon>Coelurosauria</taxon>
        <taxon>Aves</taxon>
        <taxon>Neognathae</taxon>
        <taxon>Galloanserae</taxon>
        <taxon>Galliformes</taxon>
        <taxon>Phasianidae</taxon>
        <taxon>Phasianinae</taxon>
        <taxon>Gallus</taxon>
    </lineage>
</organism>